<gene>
    <name evidence="1" type="primary">rpmE</name>
    <name type="ordered locus">JTY_1333</name>
</gene>
<dbReference type="EMBL" id="AP010918">
    <property type="protein sequence ID" value="BAH25621.1"/>
    <property type="molecule type" value="Genomic_DNA"/>
</dbReference>
<dbReference type="RefSeq" id="WP_003406668.1">
    <property type="nucleotide sequence ID" value="NZ_CP014566.1"/>
</dbReference>
<dbReference type="SMR" id="C1AMU2"/>
<dbReference type="GeneID" id="45425272"/>
<dbReference type="KEGG" id="mbt:JTY_1333"/>
<dbReference type="HOGENOM" id="CLU_114306_4_0_11"/>
<dbReference type="GO" id="GO:1990904">
    <property type="term" value="C:ribonucleoprotein complex"/>
    <property type="evidence" value="ECO:0007669"/>
    <property type="project" value="UniProtKB-KW"/>
</dbReference>
<dbReference type="GO" id="GO:0005840">
    <property type="term" value="C:ribosome"/>
    <property type="evidence" value="ECO:0007669"/>
    <property type="project" value="UniProtKB-KW"/>
</dbReference>
<dbReference type="GO" id="GO:0046872">
    <property type="term" value="F:metal ion binding"/>
    <property type="evidence" value="ECO:0007669"/>
    <property type="project" value="UniProtKB-KW"/>
</dbReference>
<dbReference type="GO" id="GO:0019843">
    <property type="term" value="F:rRNA binding"/>
    <property type="evidence" value="ECO:0007669"/>
    <property type="project" value="UniProtKB-KW"/>
</dbReference>
<dbReference type="GO" id="GO:0003735">
    <property type="term" value="F:structural constituent of ribosome"/>
    <property type="evidence" value="ECO:0007669"/>
    <property type="project" value="InterPro"/>
</dbReference>
<dbReference type="GO" id="GO:0006412">
    <property type="term" value="P:translation"/>
    <property type="evidence" value="ECO:0007669"/>
    <property type="project" value="UniProtKB-UniRule"/>
</dbReference>
<dbReference type="Gene3D" id="4.10.830.30">
    <property type="entry name" value="Ribosomal protein L31"/>
    <property type="match status" value="1"/>
</dbReference>
<dbReference type="HAMAP" id="MF_00501">
    <property type="entry name" value="Ribosomal_bL31_1"/>
    <property type="match status" value="1"/>
</dbReference>
<dbReference type="InterPro" id="IPR034704">
    <property type="entry name" value="Ribosomal_bL28/bL31-like_sf"/>
</dbReference>
<dbReference type="InterPro" id="IPR002150">
    <property type="entry name" value="Ribosomal_bL31"/>
</dbReference>
<dbReference type="InterPro" id="IPR027491">
    <property type="entry name" value="Ribosomal_bL31_A"/>
</dbReference>
<dbReference type="InterPro" id="IPR042105">
    <property type="entry name" value="Ribosomal_bL31_sf"/>
</dbReference>
<dbReference type="NCBIfam" id="TIGR00105">
    <property type="entry name" value="L31"/>
    <property type="match status" value="1"/>
</dbReference>
<dbReference type="NCBIfam" id="NF000612">
    <property type="entry name" value="PRK00019.1"/>
    <property type="match status" value="1"/>
</dbReference>
<dbReference type="NCBIfam" id="NF001809">
    <property type="entry name" value="PRK00528.1"/>
    <property type="match status" value="1"/>
</dbReference>
<dbReference type="PANTHER" id="PTHR33280">
    <property type="entry name" value="50S RIBOSOMAL PROTEIN L31, CHLOROPLASTIC"/>
    <property type="match status" value="1"/>
</dbReference>
<dbReference type="PANTHER" id="PTHR33280:SF1">
    <property type="entry name" value="LARGE RIBOSOMAL SUBUNIT PROTEIN BL31C"/>
    <property type="match status" value="1"/>
</dbReference>
<dbReference type="Pfam" id="PF01197">
    <property type="entry name" value="Ribosomal_L31"/>
    <property type="match status" value="1"/>
</dbReference>
<dbReference type="PRINTS" id="PR01249">
    <property type="entry name" value="RIBOSOMALL31"/>
</dbReference>
<dbReference type="SUPFAM" id="SSF143800">
    <property type="entry name" value="L28p-like"/>
    <property type="match status" value="1"/>
</dbReference>
<dbReference type="PROSITE" id="PS01143">
    <property type="entry name" value="RIBOSOMAL_L31"/>
    <property type="match status" value="1"/>
</dbReference>
<reference key="1">
    <citation type="journal article" date="2009" name="Vaccine">
        <title>Whole genome sequence analysis of Mycobacterium bovis bacillus Calmette-Guerin (BCG) Tokyo 172: a comparative study of BCG vaccine substrains.</title>
        <authorList>
            <person name="Seki M."/>
            <person name="Honda I."/>
            <person name="Fujita I."/>
            <person name="Yano I."/>
            <person name="Yamamoto S."/>
            <person name="Koyama A."/>
        </authorList>
    </citation>
    <scope>NUCLEOTIDE SEQUENCE [LARGE SCALE GENOMIC DNA]</scope>
    <source>
        <strain>BCG / Tokyo 172 / ATCC 35737 / TMC 1019</strain>
    </source>
</reference>
<keyword id="KW-0479">Metal-binding</keyword>
<keyword id="KW-0687">Ribonucleoprotein</keyword>
<keyword id="KW-0689">Ribosomal protein</keyword>
<keyword id="KW-0694">RNA-binding</keyword>
<keyword id="KW-0699">rRNA-binding</keyword>
<keyword id="KW-0862">Zinc</keyword>
<comment type="function">
    <text evidence="1">Binds the 23S rRNA.</text>
</comment>
<comment type="cofactor">
    <cofactor evidence="1">
        <name>Zn(2+)</name>
        <dbReference type="ChEBI" id="CHEBI:29105"/>
    </cofactor>
    <text evidence="1">Binds 1 zinc ion per subunit.</text>
</comment>
<comment type="subunit">
    <text evidence="1">Part of the 50S ribosomal subunit.</text>
</comment>
<comment type="similarity">
    <text evidence="1">Belongs to the bacterial ribosomal protein bL31 family. Type A subfamily.</text>
</comment>
<proteinExistence type="inferred from homology"/>
<evidence type="ECO:0000255" key="1">
    <source>
        <dbReference type="HAMAP-Rule" id="MF_00501"/>
    </source>
</evidence>
<evidence type="ECO:0000305" key="2"/>
<accession>C1AMU2</accession>
<sequence length="80" mass="8753">MKSDIHPAYEETTVVCGCGNTFQTRSTKPGGRIVVEVCSQCHPFYTGKQKILDSGGRVARFEKRYGKRKVGADKAVSTGK</sequence>
<protein>
    <recommendedName>
        <fullName evidence="1">Large ribosomal subunit protein bL31</fullName>
    </recommendedName>
    <alternativeName>
        <fullName evidence="2">50S ribosomal protein L31</fullName>
    </alternativeName>
</protein>
<name>RL31_MYCBT</name>
<feature type="chain" id="PRO_1000176968" description="Large ribosomal subunit protein bL31">
    <location>
        <begin position="1"/>
        <end position="80"/>
    </location>
</feature>
<feature type="binding site" evidence="1">
    <location>
        <position position="16"/>
    </location>
    <ligand>
        <name>Zn(2+)</name>
        <dbReference type="ChEBI" id="CHEBI:29105"/>
    </ligand>
</feature>
<feature type="binding site" evidence="1">
    <location>
        <position position="18"/>
    </location>
    <ligand>
        <name>Zn(2+)</name>
        <dbReference type="ChEBI" id="CHEBI:29105"/>
    </ligand>
</feature>
<feature type="binding site" evidence="1">
    <location>
        <position position="38"/>
    </location>
    <ligand>
        <name>Zn(2+)</name>
        <dbReference type="ChEBI" id="CHEBI:29105"/>
    </ligand>
</feature>
<feature type="binding site" evidence="1">
    <location>
        <position position="41"/>
    </location>
    <ligand>
        <name>Zn(2+)</name>
        <dbReference type="ChEBI" id="CHEBI:29105"/>
    </ligand>
</feature>
<organism>
    <name type="scientific">Mycobacterium bovis (strain BCG / Tokyo 172 / ATCC 35737 / TMC 1019)</name>
    <dbReference type="NCBI Taxonomy" id="561275"/>
    <lineage>
        <taxon>Bacteria</taxon>
        <taxon>Bacillati</taxon>
        <taxon>Actinomycetota</taxon>
        <taxon>Actinomycetes</taxon>
        <taxon>Mycobacteriales</taxon>
        <taxon>Mycobacteriaceae</taxon>
        <taxon>Mycobacterium</taxon>
        <taxon>Mycobacterium tuberculosis complex</taxon>
    </lineage>
</organism>